<dbReference type="EMBL" id="GQ294472">
    <property type="protein sequence ID" value="ADG86350.1"/>
    <property type="molecule type" value="Viral_cRNA"/>
</dbReference>
<dbReference type="RefSeq" id="YP_007641371.1">
    <property type="nucleotide sequence ID" value="NC_020804.1"/>
</dbReference>
<dbReference type="GeneID" id="14857901"/>
<dbReference type="KEGG" id="vg:14857901"/>
<dbReference type="Proteomes" id="UP000029770">
    <property type="component" value="Segment"/>
</dbReference>
<organismHost>
    <name type="scientific">Bos taurus</name>
    <name type="common">Bovine</name>
    <dbReference type="NCBI Taxonomy" id="9913"/>
</organismHost>
<organismHost>
    <name type="scientific">Culicoides brevitarsis</name>
    <dbReference type="NCBI Taxonomy" id="469753"/>
</organismHost>
<name>U1_TIBVC</name>
<keyword id="KW-1185">Reference proteome</keyword>
<reference key="1">
    <citation type="journal article" date="2011" name="J. Gen. Virol.">
        <title>Tibrogargan and Coastal Plains rhabdoviruses: genomic characterization, evolution of novel genes and seroprevalence in Australian livestock.</title>
        <authorList>
            <person name="Gubala A."/>
            <person name="Davis S."/>
            <person name="Weir R."/>
            <person name="Melville L."/>
            <person name="Cowled C."/>
            <person name="Boyle D."/>
        </authorList>
    </citation>
    <scope>NUCLEOTIDE SEQUENCE [GENOMIC RNA]</scope>
    <source>
        <strain>CS132</strain>
    </source>
</reference>
<organism>
    <name type="scientific">Tibrogargan virus (strain CS132)</name>
    <name type="common">TIBV</name>
    <dbReference type="NCBI Taxonomy" id="1559361"/>
    <lineage>
        <taxon>Viruses</taxon>
        <taxon>Riboviria</taxon>
        <taxon>Orthornavirae</taxon>
        <taxon>Negarnaviricota</taxon>
        <taxon>Haploviricotina</taxon>
        <taxon>Monjiviricetes</taxon>
        <taxon>Mononegavirales</taxon>
        <taxon>Rhabdoviridae</taxon>
        <taxon>Alpharhabdovirinae</taxon>
        <taxon>Tibrovirus</taxon>
        <taxon>Tibrovirus tibrogargan</taxon>
    </lineage>
</organism>
<sequence>MEQTWMITCKVEFRSSVMFELDYEDTVLNLLQALPTNQTNPAKFIINSLTIPLAVQNAFQNKDFWRDPTGSKGEFHLVIKVILDGLENNENDWADSITCHWLDQRSGFYVMVDSTFVGHKLSGEIMCTVDEKICECIEKFANIIPNKYNYYHHTNYRFHIQRYRVNISIG</sequence>
<protein>
    <recommendedName>
        <fullName>Protein U1</fullName>
    </recommendedName>
</protein>
<proteinExistence type="inferred from homology"/>
<feature type="chain" id="PRO_0000432056" description="Protein U1">
    <location>
        <begin position="1"/>
        <end position="170"/>
    </location>
</feature>
<accession>D8V073</accession>
<gene>
    <name type="primary">U1</name>
</gene>
<comment type="similarity">
    <text evidence="1">Belongs to the tibrovirus protein U1 family.</text>
</comment>
<evidence type="ECO:0000305" key="1">
    <source>
    </source>
</evidence>